<gene>
    <name type="primary">rnhB</name>
    <name type="ordered locus">llmg_1176</name>
</gene>
<protein>
    <recommendedName>
        <fullName>Ribonuclease HII</fullName>
        <shortName>RNase HII</shortName>
        <ecNumber>3.1.26.4</ecNumber>
    </recommendedName>
</protein>
<evidence type="ECO:0000250" key="1"/>
<evidence type="ECO:0000255" key="2">
    <source>
        <dbReference type="PROSITE-ProRule" id="PRU01319"/>
    </source>
</evidence>
<evidence type="ECO:0000305" key="3"/>
<feature type="chain" id="PRO_0000111584" description="Ribonuclease HII">
    <location>
        <begin position="1"/>
        <end position="257"/>
    </location>
</feature>
<feature type="domain" description="RNase H type-2" evidence="2">
    <location>
        <begin position="71"/>
        <end position="257"/>
    </location>
</feature>
<feature type="binding site" evidence="1">
    <location>
        <position position="77"/>
    </location>
    <ligand>
        <name>a divalent metal cation</name>
        <dbReference type="ChEBI" id="CHEBI:60240"/>
    </ligand>
</feature>
<feature type="binding site" evidence="1">
    <location>
        <position position="78"/>
    </location>
    <ligand>
        <name>a divalent metal cation</name>
        <dbReference type="ChEBI" id="CHEBI:60240"/>
    </ligand>
</feature>
<feature type="binding site" evidence="1">
    <location>
        <position position="169"/>
    </location>
    <ligand>
        <name>a divalent metal cation</name>
        <dbReference type="ChEBI" id="CHEBI:60240"/>
    </ligand>
</feature>
<keyword id="KW-0963">Cytoplasm</keyword>
<keyword id="KW-0255">Endonuclease</keyword>
<keyword id="KW-0378">Hydrolase</keyword>
<keyword id="KW-0464">Manganese</keyword>
<keyword id="KW-0479">Metal-binding</keyword>
<keyword id="KW-0540">Nuclease</keyword>
<organism>
    <name type="scientific">Lactococcus lactis subsp. cremoris (strain MG1363)</name>
    <dbReference type="NCBI Taxonomy" id="416870"/>
    <lineage>
        <taxon>Bacteria</taxon>
        <taxon>Bacillati</taxon>
        <taxon>Bacillota</taxon>
        <taxon>Bacilli</taxon>
        <taxon>Lactobacillales</taxon>
        <taxon>Streptococcaceae</taxon>
        <taxon>Lactococcus</taxon>
        <taxon>Lactococcus cremoris subsp. cremoris</taxon>
    </lineage>
</organism>
<sequence>MGQTIKEIKARLADLTDLSAKEFLEFETDERAGVQAALKSRKKQILAECAEDERLEQMLEFEKELYSQEIELIAGIDEVGRGPLAGPVVTAAVILPKNCKIRGLNDSKKVPKSKHHAILSEIQEKALAIGVGIVDAEKIDEVNIYEATKIAMIQAVSKLSLKPEHLLIDAMVLDLPIAQTKIIHGDARSASIAAASIVAKVTRDEMMKDFALEFPEYDFEHNAGYGTAKHLAALTKYGITRIHRKSYEPIKSMVNFK</sequence>
<name>RNH2_LACLM</name>
<accession>O30415</accession>
<accession>A2RKF9</accession>
<reference key="1">
    <citation type="journal article" date="2007" name="J. Bacteriol.">
        <title>The complete genome sequence of the lactic acid bacterial paradigm Lactococcus lactis subsp. cremoris MG1363.</title>
        <authorList>
            <person name="Wegmann U."/>
            <person name="O'Connell-Motherway M."/>
            <person name="Zomer A."/>
            <person name="Buist G."/>
            <person name="Shearman C."/>
            <person name="Canchaya C."/>
            <person name="Ventura M."/>
            <person name="Goesmann A."/>
            <person name="Gasson M.J."/>
            <person name="Kuipers O.P."/>
            <person name="van Sinderen D."/>
            <person name="Kok J."/>
        </authorList>
    </citation>
    <scope>NUCLEOTIDE SEQUENCE [LARGE SCALE GENOMIC DNA]</scope>
    <source>
        <strain>MG1363</strain>
    </source>
</reference>
<reference key="2">
    <citation type="journal article" date="1998" name="Mol. Microbiol.">
        <title>A chloride-inducible acid resistance mechanism in Lactococcus lactis and its regulation.</title>
        <authorList>
            <person name="Sanders J.W."/>
            <person name="Leenhouts K."/>
            <person name="Burghoorn J."/>
            <person name="Brands J.R."/>
            <person name="Venema G."/>
            <person name="Kok J."/>
        </authorList>
    </citation>
    <scope>NUCLEOTIDE SEQUENCE [GENOMIC DNA] OF 92-257</scope>
</reference>
<dbReference type="EC" id="3.1.26.4"/>
<dbReference type="EMBL" id="AM406671">
    <property type="protein sequence ID" value="CAL97769.1"/>
    <property type="molecule type" value="Genomic_DNA"/>
</dbReference>
<dbReference type="EMBL" id="AF005098">
    <property type="protein sequence ID" value="AAC46185.1"/>
    <property type="molecule type" value="Genomic_DNA"/>
</dbReference>
<dbReference type="RefSeq" id="WP_011835077.1">
    <property type="nucleotide sequence ID" value="NC_009004.1"/>
</dbReference>
<dbReference type="SMR" id="O30415"/>
<dbReference type="STRING" id="416870.llmg_1176"/>
<dbReference type="KEGG" id="llm:llmg_1176"/>
<dbReference type="eggNOG" id="COG0164">
    <property type="taxonomic scope" value="Bacteria"/>
</dbReference>
<dbReference type="HOGENOM" id="CLU_036532_2_1_9"/>
<dbReference type="OrthoDB" id="9803420at2"/>
<dbReference type="PhylomeDB" id="O30415"/>
<dbReference type="Proteomes" id="UP000000364">
    <property type="component" value="Chromosome"/>
</dbReference>
<dbReference type="GO" id="GO:0005737">
    <property type="term" value="C:cytoplasm"/>
    <property type="evidence" value="ECO:0007669"/>
    <property type="project" value="UniProtKB-SubCell"/>
</dbReference>
<dbReference type="GO" id="GO:0032299">
    <property type="term" value="C:ribonuclease H2 complex"/>
    <property type="evidence" value="ECO:0007669"/>
    <property type="project" value="TreeGrafter"/>
</dbReference>
<dbReference type="GO" id="GO:0030145">
    <property type="term" value="F:manganese ion binding"/>
    <property type="evidence" value="ECO:0007669"/>
    <property type="project" value="UniProtKB-UniRule"/>
</dbReference>
<dbReference type="GO" id="GO:0003723">
    <property type="term" value="F:RNA binding"/>
    <property type="evidence" value="ECO:0007669"/>
    <property type="project" value="InterPro"/>
</dbReference>
<dbReference type="GO" id="GO:0004523">
    <property type="term" value="F:RNA-DNA hybrid ribonuclease activity"/>
    <property type="evidence" value="ECO:0007669"/>
    <property type="project" value="UniProtKB-UniRule"/>
</dbReference>
<dbReference type="GO" id="GO:0043137">
    <property type="term" value="P:DNA replication, removal of RNA primer"/>
    <property type="evidence" value="ECO:0007669"/>
    <property type="project" value="TreeGrafter"/>
</dbReference>
<dbReference type="GO" id="GO:0006298">
    <property type="term" value="P:mismatch repair"/>
    <property type="evidence" value="ECO:0007669"/>
    <property type="project" value="TreeGrafter"/>
</dbReference>
<dbReference type="CDD" id="cd07182">
    <property type="entry name" value="RNase_HII_bacteria_HII_like"/>
    <property type="match status" value="1"/>
</dbReference>
<dbReference type="FunFam" id="3.30.420.10:FF:000006">
    <property type="entry name" value="Ribonuclease HII"/>
    <property type="match status" value="1"/>
</dbReference>
<dbReference type="Gene3D" id="3.30.420.10">
    <property type="entry name" value="Ribonuclease H-like superfamily/Ribonuclease H"/>
    <property type="match status" value="1"/>
</dbReference>
<dbReference type="HAMAP" id="MF_00052_B">
    <property type="entry name" value="RNase_HII_B"/>
    <property type="match status" value="1"/>
</dbReference>
<dbReference type="InterPro" id="IPR022898">
    <property type="entry name" value="RNase_HII"/>
</dbReference>
<dbReference type="InterPro" id="IPR001352">
    <property type="entry name" value="RNase_HII/HIII"/>
</dbReference>
<dbReference type="InterPro" id="IPR024567">
    <property type="entry name" value="RNase_HII/HIII_dom"/>
</dbReference>
<dbReference type="InterPro" id="IPR012337">
    <property type="entry name" value="RNaseH-like_sf"/>
</dbReference>
<dbReference type="InterPro" id="IPR036397">
    <property type="entry name" value="RNaseH_sf"/>
</dbReference>
<dbReference type="NCBIfam" id="NF000594">
    <property type="entry name" value="PRK00015.1-1"/>
    <property type="match status" value="1"/>
</dbReference>
<dbReference type="NCBIfam" id="NF000595">
    <property type="entry name" value="PRK00015.1-3"/>
    <property type="match status" value="1"/>
</dbReference>
<dbReference type="PANTHER" id="PTHR10954">
    <property type="entry name" value="RIBONUCLEASE H2 SUBUNIT A"/>
    <property type="match status" value="1"/>
</dbReference>
<dbReference type="PANTHER" id="PTHR10954:SF18">
    <property type="entry name" value="RIBONUCLEASE HII"/>
    <property type="match status" value="1"/>
</dbReference>
<dbReference type="Pfam" id="PF01351">
    <property type="entry name" value="RNase_HII"/>
    <property type="match status" value="1"/>
</dbReference>
<dbReference type="SUPFAM" id="SSF53098">
    <property type="entry name" value="Ribonuclease H-like"/>
    <property type="match status" value="1"/>
</dbReference>
<dbReference type="PROSITE" id="PS51975">
    <property type="entry name" value="RNASE_H_2"/>
    <property type="match status" value="1"/>
</dbReference>
<proteinExistence type="inferred from homology"/>
<comment type="function">
    <text evidence="1">Endonuclease that specifically degrades the RNA of RNA-DNA hybrids.</text>
</comment>
<comment type="catalytic activity">
    <reaction>
        <text>Endonucleolytic cleavage to 5'-phosphomonoester.</text>
        <dbReference type="EC" id="3.1.26.4"/>
    </reaction>
</comment>
<comment type="cofactor">
    <cofactor evidence="1">
        <name>Mn(2+)</name>
        <dbReference type="ChEBI" id="CHEBI:29035"/>
    </cofactor>
    <cofactor evidence="1">
        <name>Mg(2+)</name>
        <dbReference type="ChEBI" id="CHEBI:18420"/>
    </cofactor>
    <text evidence="1">Manganese or magnesium. Binds 1 divalent metal ion per monomer in the absence of substrate. May bind a second metal ion after substrate binding.</text>
</comment>
<comment type="subcellular location">
    <subcellularLocation>
        <location evidence="3">Cytoplasm</location>
    </subcellularLocation>
</comment>
<comment type="similarity">
    <text evidence="3">Belongs to the RNase HII family.</text>
</comment>